<protein>
    <recommendedName>
        <fullName evidence="1">Large ribosomal subunit protein uL5</fullName>
    </recommendedName>
    <alternativeName>
        <fullName evidence="2">50S ribosomal protein L5</fullName>
    </alternativeName>
</protein>
<keyword id="KW-0687">Ribonucleoprotein</keyword>
<keyword id="KW-0689">Ribosomal protein</keyword>
<keyword id="KW-0694">RNA-binding</keyword>
<keyword id="KW-0699">rRNA-binding</keyword>
<keyword id="KW-0820">tRNA-binding</keyword>
<organism>
    <name type="scientific">Klebsiella pneumoniae (strain 342)</name>
    <dbReference type="NCBI Taxonomy" id="507522"/>
    <lineage>
        <taxon>Bacteria</taxon>
        <taxon>Pseudomonadati</taxon>
        <taxon>Pseudomonadota</taxon>
        <taxon>Gammaproteobacteria</taxon>
        <taxon>Enterobacterales</taxon>
        <taxon>Enterobacteriaceae</taxon>
        <taxon>Klebsiella/Raoultella group</taxon>
        <taxon>Klebsiella</taxon>
        <taxon>Klebsiella pneumoniae complex</taxon>
    </lineage>
</organism>
<evidence type="ECO:0000255" key="1">
    <source>
        <dbReference type="HAMAP-Rule" id="MF_01333"/>
    </source>
</evidence>
<evidence type="ECO:0000305" key="2"/>
<name>RL5_KLEP3</name>
<proteinExistence type="inferred from homology"/>
<reference key="1">
    <citation type="journal article" date="2008" name="PLoS Genet.">
        <title>Complete genome sequence of the N2-fixing broad host range endophyte Klebsiella pneumoniae 342 and virulence predictions verified in mice.</title>
        <authorList>
            <person name="Fouts D.E."/>
            <person name="Tyler H.L."/>
            <person name="DeBoy R.T."/>
            <person name="Daugherty S."/>
            <person name="Ren Q."/>
            <person name="Badger J.H."/>
            <person name="Durkin A.S."/>
            <person name="Huot H."/>
            <person name="Shrivastava S."/>
            <person name="Kothari S."/>
            <person name="Dodson R.J."/>
            <person name="Mohamoud Y."/>
            <person name="Khouri H."/>
            <person name="Roesch L.F.W."/>
            <person name="Krogfelt K.A."/>
            <person name="Struve C."/>
            <person name="Triplett E.W."/>
            <person name="Methe B.A."/>
        </authorList>
    </citation>
    <scope>NUCLEOTIDE SEQUENCE [LARGE SCALE GENOMIC DNA]</scope>
    <source>
        <strain>342</strain>
    </source>
</reference>
<comment type="function">
    <text evidence="1">This is one of the proteins that bind and probably mediate the attachment of the 5S RNA into the large ribosomal subunit, where it forms part of the central protuberance. In the 70S ribosome it contacts protein S13 of the 30S subunit (bridge B1b), connecting the 2 subunits; this bridge is implicated in subunit movement. Contacts the P site tRNA; the 5S rRNA and some of its associated proteins might help stabilize positioning of ribosome-bound tRNAs.</text>
</comment>
<comment type="subunit">
    <text evidence="1">Part of the 50S ribosomal subunit; part of the 5S rRNA/L5/L18/L25 subcomplex. Contacts the 5S rRNA and the P site tRNA. Forms a bridge to the 30S subunit in the 70S ribosome.</text>
</comment>
<comment type="similarity">
    <text evidence="1">Belongs to the universal ribosomal protein uL5 family.</text>
</comment>
<sequence length="179" mass="20275">MAKLHDYYKDEVVAKLMTEFNYNSVMQVPRVEKITLNMGVGEAIADKKLLDNAAADLTAISGQKPLITKARKSVAGFKIRQGYPIGCKVTLRGERMWEFFERLITIAVPRIRDFRGLSAKSFDGRGNYSMGVREQIIFPEIDYDKVDRVRGLDITITTTAKSDEEGRALLAAFDFPFRK</sequence>
<accession>B5XNA5</accession>
<feature type="chain" id="PRO_1000142413" description="Large ribosomal subunit protein uL5">
    <location>
        <begin position="1"/>
        <end position="179"/>
    </location>
</feature>
<dbReference type="EMBL" id="CP000964">
    <property type="protein sequence ID" value="ACI09997.1"/>
    <property type="molecule type" value="Genomic_DNA"/>
</dbReference>
<dbReference type="SMR" id="B5XNA5"/>
<dbReference type="KEGG" id="kpe:KPK_0410"/>
<dbReference type="HOGENOM" id="CLU_061015_2_1_6"/>
<dbReference type="Proteomes" id="UP000001734">
    <property type="component" value="Chromosome"/>
</dbReference>
<dbReference type="GO" id="GO:1990904">
    <property type="term" value="C:ribonucleoprotein complex"/>
    <property type="evidence" value="ECO:0007669"/>
    <property type="project" value="UniProtKB-KW"/>
</dbReference>
<dbReference type="GO" id="GO:0005840">
    <property type="term" value="C:ribosome"/>
    <property type="evidence" value="ECO:0007669"/>
    <property type="project" value="UniProtKB-KW"/>
</dbReference>
<dbReference type="GO" id="GO:0019843">
    <property type="term" value="F:rRNA binding"/>
    <property type="evidence" value="ECO:0007669"/>
    <property type="project" value="UniProtKB-UniRule"/>
</dbReference>
<dbReference type="GO" id="GO:0003735">
    <property type="term" value="F:structural constituent of ribosome"/>
    <property type="evidence" value="ECO:0007669"/>
    <property type="project" value="InterPro"/>
</dbReference>
<dbReference type="GO" id="GO:0000049">
    <property type="term" value="F:tRNA binding"/>
    <property type="evidence" value="ECO:0007669"/>
    <property type="project" value="UniProtKB-UniRule"/>
</dbReference>
<dbReference type="GO" id="GO:0006412">
    <property type="term" value="P:translation"/>
    <property type="evidence" value="ECO:0007669"/>
    <property type="project" value="UniProtKB-UniRule"/>
</dbReference>
<dbReference type="FunFam" id="3.30.1440.10:FF:000001">
    <property type="entry name" value="50S ribosomal protein L5"/>
    <property type="match status" value="1"/>
</dbReference>
<dbReference type="Gene3D" id="3.30.1440.10">
    <property type="match status" value="1"/>
</dbReference>
<dbReference type="HAMAP" id="MF_01333_B">
    <property type="entry name" value="Ribosomal_uL5_B"/>
    <property type="match status" value="1"/>
</dbReference>
<dbReference type="InterPro" id="IPR002132">
    <property type="entry name" value="Ribosomal_uL5"/>
</dbReference>
<dbReference type="InterPro" id="IPR020930">
    <property type="entry name" value="Ribosomal_uL5_bac-type"/>
</dbReference>
<dbReference type="InterPro" id="IPR031309">
    <property type="entry name" value="Ribosomal_uL5_C"/>
</dbReference>
<dbReference type="InterPro" id="IPR020929">
    <property type="entry name" value="Ribosomal_uL5_CS"/>
</dbReference>
<dbReference type="InterPro" id="IPR022803">
    <property type="entry name" value="Ribosomal_uL5_dom_sf"/>
</dbReference>
<dbReference type="InterPro" id="IPR031310">
    <property type="entry name" value="Ribosomal_uL5_N"/>
</dbReference>
<dbReference type="NCBIfam" id="NF000585">
    <property type="entry name" value="PRK00010.1"/>
    <property type="match status" value="1"/>
</dbReference>
<dbReference type="PANTHER" id="PTHR11994">
    <property type="entry name" value="60S RIBOSOMAL PROTEIN L11-RELATED"/>
    <property type="match status" value="1"/>
</dbReference>
<dbReference type="Pfam" id="PF00281">
    <property type="entry name" value="Ribosomal_L5"/>
    <property type="match status" value="1"/>
</dbReference>
<dbReference type="Pfam" id="PF00673">
    <property type="entry name" value="Ribosomal_L5_C"/>
    <property type="match status" value="1"/>
</dbReference>
<dbReference type="PIRSF" id="PIRSF002161">
    <property type="entry name" value="Ribosomal_L5"/>
    <property type="match status" value="1"/>
</dbReference>
<dbReference type="SUPFAM" id="SSF55282">
    <property type="entry name" value="RL5-like"/>
    <property type="match status" value="1"/>
</dbReference>
<dbReference type="PROSITE" id="PS00358">
    <property type="entry name" value="RIBOSOMAL_L5"/>
    <property type="match status" value="1"/>
</dbReference>
<gene>
    <name evidence="1" type="primary">rplE</name>
    <name type="ordered locus">KPK_0410</name>
</gene>